<name>NADD_CROS8</name>
<dbReference type="EC" id="2.7.7.18" evidence="1"/>
<dbReference type="EMBL" id="CP000783">
    <property type="protein sequence ID" value="ABU77921.1"/>
    <property type="molecule type" value="Genomic_DNA"/>
</dbReference>
<dbReference type="RefSeq" id="WP_012125370.1">
    <property type="nucleotide sequence ID" value="NC_009778.1"/>
</dbReference>
<dbReference type="SMR" id="A7MQS3"/>
<dbReference type="KEGG" id="esa:ESA_02689"/>
<dbReference type="PATRIC" id="fig|290339.8.peg.2389"/>
<dbReference type="HOGENOM" id="CLU_069765_0_0_6"/>
<dbReference type="UniPathway" id="UPA00253">
    <property type="reaction ID" value="UER00332"/>
</dbReference>
<dbReference type="Proteomes" id="UP000000260">
    <property type="component" value="Chromosome"/>
</dbReference>
<dbReference type="GO" id="GO:0005524">
    <property type="term" value="F:ATP binding"/>
    <property type="evidence" value="ECO:0007669"/>
    <property type="project" value="UniProtKB-KW"/>
</dbReference>
<dbReference type="GO" id="GO:0004515">
    <property type="term" value="F:nicotinate-nucleotide adenylyltransferase activity"/>
    <property type="evidence" value="ECO:0007669"/>
    <property type="project" value="UniProtKB-UniRule"/>
</dbReference>
<dbReference type="GO" id="GO:0009435">
    <property type="term" value="P:NAD biosynthetic process"/>
    <property type="evidence" value="ECO:0007669"/>
    <property type="project" value="UniProtKB-UniRule"/>
</dbReference>
<dbReference type="CDD" id="cd02165">
    <property type="entry name" value="NMNAT"/>
    <property type="match status" value="1"/>
</dbReference>
<dbReference type="FunFam" id="3.40.50.620:FF:000039">
    <property type="entry name" value="Probable nicotinate-nucleotide adenylyltransferase"/>
    <property type="match status" value="1"/>
</dbReference>
<dbReference type="Gene3D" id="3.40.50.620">
    <property type="entry name" value="HUPs"/>
    <property type="match status" value="1"/>
</dbReference>
<dbReference type="HAMAP" id="MF_00244">
    <property type="entry name" value="NaMN_adenylyltr"/>
    <property type="match status" value="1"/>
</dbReference>
<dbReference type="InterPro" id="IPR004821">
    <property type="entry name" value="Cyt_trans-like"/>
</dbReference>
<dbReference type="InterPro" id="IPR005248">
    <property type="entry name" value="NadD/NMNAT"/>
</dbReference>
<dbReference type="InterPro" id="IPR014729">
    <property type="entry name" value="Rossmann-like_a/b/a_fold"/>
</dbReference>
<dbReference type="NCBIfam" id="TIGR00125">
    <property type="entry name" value="cyt_tran_rel"/>
    <property type="match status" value="1"/>
</dbReference>
<dbReference type="NCBIfam" id="TIGR00482">
    <property type="entry name" value="nicotinate (nicotinamide) nucleotide adenylyltransferase"/>
    <property type="match status" value="1"/>
</dbReference>
<dbReference type="NCBIfam" id="NF000839">
    <property type="entry name" value="PRK00071.1-1"/>
    <property type="match status" value="1"/>
</dbReference>
<dbReference type="PANTHER" id="PTHR39321">
    <property type="entry name" value="NICOTINATE-NUCLEOTIDE ADENYLYLTRANSFERASE-RELATED"/>
    <property type="match status" value="1"/>
</dbReference>
<dbReference type="PANTHER" id="PTHR39321:SF3">
    <property type="entry name" value="PHOSPHOPANTETHEINE ADENYLYLTRANSFERASE"/>
    <property type="match status" value="1"/>
</dbReference>
<dbReference type="Pfam" id="PF01467">
    <property type="entry name" value="CTP_transf_like"/>
    <property type="match status" value="1"/>
</dbReference>
<dbReference type="SUPFAM" id="SSF52374">
    <property type="entry name" value="Nucleotidylyl transferase"/>
    <property type="match status" value="1"/>
</dbReference>
<evidence type="ECO:0000255" key="1">
    <source>
        <dbReference type="HAMAP-Rule" id="MF_00244"/>
    </source>
</evidence>
<protein>
    <recommendedName>
        <fullName evidence="1">Probable nicotinate-nucleotide adenylyltransferase</fullName>
        <ecNumber evidence="1">2.7.7.18</ecNumber>
    </recommendedName>
    <alternativeName>
        <fullName evidence="1">Deamido-NAD(+) diphosphorylase</fullName>
    </alternativeName>
    <alternativeName>
        <fullName evidence="1">Deamido-NAD(+) pyrophosphorylase</fullName>
    </alternativeName>
    <alternativeName>
        <fullName evidence="1">Nicotinate mononucleotide adenylyltransferase</fullName>
        <shortName evidence="1">NaMN adenylyltransferase</shortName>
    </alternativeName>
</protein>
<keyword id="KW-0067">ATP-binding</keyword>
<keyword id="KW-0520">NAD</keyword>
<keyword id="KW-0547">Nucleotide-binding</keyword>
<keyword id="KW-0548">Nucleotidyltransferase</keyword>
<keyword id="KW-0662">Pyridine nucleotide biosynthesis</keyword>
<keyword id="KW-1185">Reference proteome</keyword>
<keyword id="KW-0808">Transferase</keyword>
<comment type="function">
    <text evidence="1">Catalyzes the reversible adenylation of nicotinate mononucleotide (NaMN) to nicotinic acid adenine dinucleotide (NaAD).</text>
</comment>
<comment type="catalytic activity">
    <reaction evidence="1">
        <text>nicotinate beta-D-ribonucleotide + ATP + H(+) = deamido-NAD(+) + diphosphate</text>
        <dbReference type="Rhea" id="RHEA:22860"/>
        <dbReference type="ChEBI" id="CHEBI:15378"/>
        <dbReference type="ChEBI" id="CHEBI:30616"/>
        <dbReference type="ChEBI" id="CHEBI:33019"/>
        <dbReference type="ChEBI" id="CHEBI:57502"/>
        <dbReference type="ChEBI" id="CHEBI:58437"/>
        <dbReference type="EC" id="2.7.7.18"/>
    </reaction>
</comment>
<comment type="pathway">
    <text evidence="1">Cofactor biosynthesis; NAD(+) biosynthesis; deamido-NAD(+) from nicotinate D-ribonucleotide: step 1/1.</text>
</comment>
<comment type="similarity">
    <text evidence="1">Belongs to the NadD family.</text>
</comment>
<accession>A7MQS3</accession>
<feature type="chain" id="PRO_0000336688" description="Probable nicotinate-nucleotide adenylyltransferase">
    <location>
        <begin position="1"/>
        <end position="219"/>
    </location>
</feature>
<organism>
    <name type="scientific">Cronobacter sakazakii (strain ATCC BAA-894)</name>
    <name type="common">Enterobacter sakazakii</name>
    <dbReference type="NCBI Taxonomy" id="290339"/>
    <lineage>
        <taxon>Bacteria</taxon>
        <taxon>Pseudomonadati</taxon>
        <taxon>Pseudomonadota</taxon>
        <taxon>Gammaproteobacteria</taxon>
        <taxon>Enterobacterales</taxon>
        <taxon>Enterobacteriaceae</taxon>
        <taxon>Cronobacter</taxon>
    </lineage>
</organism>
<sequence length="219" mass="24712">MTDRIPALQAWYGGTFDPIHYGHLRAVEALAREVKLTQVTILPNNVPPHRPQPGASSLQRKAMVELAIAGHPLFRLDTRELQRATPSWTSETMVQLRLEAGPDAPLAFIIGQDSLLTLRTWHNYEALLACCHLLVCRRPGYPVEMKTDEDQRWLAPRLARHVDELHREPAGKIYLADTPLYPISATDIRARLASHQSCDDLLPPAVLAYIQRHALYRPA</sequence>
<reference key="1">
    <citation type="journal article" date="2010" name="PLoS ONE">
        <title>Genome sequence of Cronobacter sakazakii BAA-894 and comparative genomic hybridization analysis with other Cronobacter species.</title>
        <authorList>
            <person name="Kucerova E."/>
            <person name="Clifton S.W."/>
            <person name="Xia X.Q."/>
            <person name="Long F."/>
            <person name="Porwollik S."/>
            <person name="Fulton L."/>
            <person name="Fronick C."/>
            <person name="Minx P."/>
            <person name="Kyung K."/>
            <person name="Warren W."/>
            <person name="Fulton R."/>
            <person name="Feng D."/>
            <person name="Wollam A."/>
            <person name="Shah N."/>
            <person name="Bhonagiri V."/>
            <person name="Nash W.E."/>
            <person name="Hallsworth-Pepin K."/>
            <person name="Wilson R.K."/>
            <person name="McClelland M."/>
            <person name="Forsythe S.J."/>
        </authorList>
    </citation>
    <scope>NUCLEOTIDE SEQUENCE [LARGE SCALE GENOMIC DNA]</scope>
    <source>
        <strain>ATCC BAA-894</strain>
    </source>
</reference>
<proteinExistence type="inferred from homology"/>
<gene>
    <name evidence="1" type="primary">nadD</name>
    <name type="ordered locus">ESA_02689</name>
</gene>